<accession>P49564</accession>
<sequence length="58" mass="6505">MAVPKKRTSKAKKNARKSVWKKKADKAAKKSLSLAKSVLQGKTTSFVYSLYIDELFSI</sequence>
<evidence type="ECO:0000250" key="1"/>
<evidence type="ECO:0000256" key="2">
    <source>
        <dbReference type="SAM" id="MobiDB-lite"/>
    </source>
</evidence>
<evidence type="ECO:0000305" key="3"/>
<name>RK32_TRICV</name>
<geneLocation type="chloroplast"/>
<organism>
    <name type="scientific">Trieres chinensis</name>
    <name type="common">Marine centric diatom</name>
    <name type="synonym">Odontella sinensis</name>
    <dbReference type="NCBI Taxonomy" id="1514140"/>
    <lineage>
        <taxon>Eukaryota</taxon>
        <taxon>Sar</taxon>
        <taxon>Stramenopiles</taxon>
        <taxon>Ochrophyta</taxon>
        <taxon>Bacillariophyta</taxon>
        <taxon>Mediophyceae</taxon>
        <taxon>Biddulphiophycidae</taxon>
        <taxon>Eupodiscales</taxon>
        <taxon>Parodontellaceae</taxon>
        <taxon>Trieres</taxon>
    </lineage>
</organism>
<comment type="subcellular location">
    <subcellularLocation>
        <location>Plastid</location>
        <location>Chloroplast</location>
    </subcellularLocation>
</comment>
<comment type="similarity">
    <text evidence="3">Belongs to the bacterial ribosomal protein bL32 family.</text>
</comment>
<proteinExistence type="inferred from homology"/>
<feature type="initiator methionine" description="Removed" evidence="1">
    <location>
        <position position="1"/>
    </location>
</feature>
<feature type="chain" id="PRO_0000172467" description="Large ribosomal subunit protein bL32c">
    <location>
        <begin position="2"/>
        <end position="58"/>
    </location>
</feature>
<feature type="region of interest" description="Disordered" evidence="2">
    <location>
        <begin position="1"/>
        <end position="23"/>
    </location>
</feature>
<dbReference type="EMBL" id="Z67753">
    <property type="protein sequence ID" value="CAA91613.1"/>
    <property type="molecule type" value="Genomic_DNA"/>
</dbReference>
<dbReference type="EMBL" id="Z67753">
    <property type="protein sequence ID" value="CAA91665.1"/>
    <property type="molecule type" value="Genomic_DNA"/>
</dbReference>
<dbReference type="PIR" id="S78240">
    <property type="entry name" value="S78240"/>
</dbReference>
<dbReference type="PIR" id="S78292">
    <property type="entry name" value="S78292"/>
</dbReference>
<dbReference type="SMR" id="P49564"/>
<dbReference type="GO" id="GO:0009507">
    <property type="term" value="C:chloroplast"/>
    <property type="evidence" value="ECO:0007669"/>
    <property type="project" value="UniProtKB-SubCell"/>
</dbReference>
<dbReference type="GO" id="GO:0015934">
    <property type="term" value="C:large ribosomal subunit"/>
    <property type="evidence" value="ECO:0007669"/>
    <property type="project" value="InterPro"/>
</dbReference>
<dbReference type="GO" id="GO:0003735">
    <property type="term" value="F:structural constituent of ribosome"/>
    <property type="evidence" value="ECO:0007669"/>
    <property type="project" value="InterPro"/>
</dbReference>
<dbReference type="GO" id="GO:0006412">
    <property type="term" value="P:translation"/>
    <property type="evidence" value="ECO:0007669"/>
    <property type="project" value="UniProtKB-UniRule"/>
</dbReference>
<dbReference type="HAMAP" id="MF_00340">
    <property type="entry name" value="Ribosomal_bL32"/>
    <property type="match status" value="1"/>
</dbReference>
<dbReference type="InterPro" id="IPR002677">
    <property type="entry name" value="Ribosomal_bL32"/>
</dbReference>
<dbReference type="InterPro" id="IPR044958">
    <property type="entry name" value="Ribosomal_bL32_plant/cyanobact"/>
</dbReference>
<dbReference type="InterPro" id="IPR011332">
    <property type="entry name" value="Ribosomal_zn-bd"/>
</dbReference>
<dbReference type="NCBIfam" id="TIGR01031">
    <property type="entry name" value="rpmF_bact"/>
    <property type="match status" value="1"/>
</dbReference>
<dbReference type="PANTHER" id="PTHR36083">
    <property type="entry name" value="50S RIBOSOMAL PROTEIN L32, CHLOROPLASTIC"/>
    <property type="match status" value="1"/>
</dbReference>
<dbReference type="PANTHER" id="PTHR36083:SF1">
    <property type="entry name" value="LARGE RIBOSOMAL SUBUNIT PROTEIN BL32C"/>
    <property type="match status" value="1"/>
</dbReference>
<dbReference type="Pfam" id="PF01783">
    <property type="entry name" value="Ribosomal_L32p"/>
    <property type="match status" value="1"/>
</dbReference>
<dbReference type="SUPFAM" id="SSF57829">
    <property type="entry name" value="Zn-binding ribosomal proteins"/>
    <property type="match status" value="1"/>
</dbReference>
<reference key="1">
    <citation type="journal article" date="1995" name="Plant Mol. Biol. Rep.">
        <title>The chloroplast genome of a chlorophyll a+c-containing alga, Odontella sinensis.</title>
        <authorList>
            <person name="Kowallik K.V."/>
            <person name="Stoebe B."/>
            <person name="Schaffran I."/>
            <person name="Kroth-Pancic P."/>
            <person name="Freier U."/>
        </authorList>
    </citation>
    <scope>NUCLEOTIDE SEQUENCE [LARGE SCALE GENOMIC DNA]</scope>
</reference>
<gene>
    <name type="primary">rpl32-A</name>
    <name type="synonym">rpl32</name>
</gene>
<gene>
    <name type="primary">rpl32-B</name>
    <name type="synonym">rpl32'</name>
</gene>
<protein>
    <recommendedName>
        <fullName evidence="3">Large ribosomal subunit protein bL32c</fullName>
    </recommendedName>
    <alternativeName>
        <fullName>50S ribosomal protein L32, chloroplastic</fullName>
    </alternativeName>
</protein>
<keyword id="KW-0150">Chloroplast</keyword>
<keyword id="KW-0934">Plastid</keyword>
<keyword id="KW-0687">Ribonucleoprotein</keyword>
<keyword id="KW-0689">Ribosomal protein</keyword>